<keyword id="KW-0067">ATP-binding</keyword>
<keyword id="KW-0131">Cell cycle</keyword>
<keyword id="KW-0132">Cell division</keyword>
<keyword id="KW-0133">Cell shape</keyword>
<keyword id="KW-0961">Cell wall biogenesis/degradation</keyword>
<keyword id="KW-0963">Cytoplasm</keyword>
<keyword id="KW-0436">Ligase</keyword>
<keyword id="KW-0547">Nucleotide-binding</keyword>
<keyword id="KW-0573">Peptidoglycan synthesis</keyword>
<keyword id="KW-1185">Reference proteome</keyword>
<sequence>MRISALEGCRVALWGWGRESRAAYRAFRAAFPKQPLTLFCTIAEATEVQALADPVLSIETEVSVPRLAAFDVVIKSPGISPYSPLAVAATAAGAHFIGGTQLWFAAHADTDGVVPGAVCVTGTKGKSTTTALLAHLLRAAGHCTALAGNIGLPLLELLTPQPAPEYWAIELSSYQTADVAGSGARPALALVLNVFPEHLDWHGGEQRYINDKLSLVTVARPPIALLNAADPRLASLVLPQSDLRWFNQRDGWHVRGQVVYRGEQAVLDTALIPLPGAHNGSNVCAVLATLEALGLNAVALAPAACNFRPLPNRLQFLGERDGILWVNDSISTTPHATLAALDCFLGRRRVAVLVGGYDRGVNWECFAARITRKVPLDIVTMGANGPHIQALLAPLAAGRFGLHAAVDLPHAVALARTALGAQGGVLLLSPGAPSFGAYQDYVERGRHFAILAGFDPEVISSISGLGIA</sequence>
<organism>
    <name type="scientific">Xylella fastidiosa (strain Temecula1 / ATCC 700964)</name>
    <dbReference type="NCBI Taxonomy" id="183190"/>
    <lineage>
        <taxon>Bacteria</taxon>
        <taxon>Pseudomonadati</taxon>
        <taxon>Pseudomonadota</taxon>
        <taxon>Gammaproteobacteria</taxon>
        <taxon>Lysobacterales</taxon>
        <taxon>Lysobacteraceae</taxon>
        <taxon>Xylella</taxon>
    </lineage>
</organism>
<proteinExistence type="inferred from homology"/>
<name>MURD2_XYLFT</name>
<accession>Q87EA7</accession>
<protein>
    <recommendedName>
        <fullName evidence="1">UDP-N-acetylmuramoyl-L-alanine--L-glutamate ligase</fullName>
        <ecNumber evidence="1">6.3.2.53</ecNumber>
    </recommendedName>
    <alternativeName>
        <fullName evidence="1">UDP-N-acetylmuramoyl-L-alanyl-L-glutamate synthetase</fullName>
        <shortName evidence="1">UDP-MurNAc-L-Ala-L-Glu synthetase</shortName>
    </alternativeName>
</protein>
<comment type="function">
    <text evidence="1">Cell wall formation. Catalyzes the addition of L-glutamate to the nucleotide precursor UDP-N-acetylmuramoyl-L-alanine.</text>
</comment>
<comment type="catalytic activity">
    <reaction evidence="1">
        <text>UDP-N-acetyl-alpha-D-muramoyl-L-alanine + L-glutamate + ATP = UDP-N-acetyl-alpha-D-muramoyl-L-alanyl-L-glutamate + ADP + phosphate + H(+)</text>
        <dbReference type="Rhea" id="RHEA:58816"/>
        <dbReference type="ChEBI" id="CHEBI:15378"/>
        <dbReference type="ChEBI" id="CHEBI:29985"/>
        <dbReference type="ChEBI" id="CHEBI:30616"/>
        <dbReference type="ChEBI" id="CHEBI:43474"/>
        <dbReference type="ChEBI" id="CHEBI:83898"/>
        <dbReference type="ChEBI" id="CHEBI:142725"/>
        <dbReference type="ChEBI" id="CHEBI:456216"/>
        <dbReference type="EC" id="6.3.2.53"/>
    </reaction>
</comment>
<comment type="pathway">
    <text evidence="1">Cell wall biogenesis; peptidoglycan biosynthesis.</text>
</comment>
<comment type="subcellular location">
    <subcellularLocation>
        <location evidence="1">Cytoplasm</location>
    </subcellularLocation>
</comment>
<comment type="similarity">
    <text evidence="1">Belongs to the MurCDEF family. MurD2 subfamily.</text>
</comment>
<dbReference type="EC" id="6.3.2.53" evidence="1"/>
<dbReference type="EMBL" id="AE009442">
    <property type="protein sequence ID" value="AAO28290.1"/>
    <property type="molecule type" value="Genomic_DNA"/>
</dbReference>
<dbReference type="SMR" id="Q87EA7"/>
<dbReference type="KEGG" id="xft:PD_0410"/>
<dbReference type="HOGENOM" id="CLU_032540_4_1_6"/>
<dbReference type="UniPathway" id="UPA00219"/>
<dbReference type="Proteomes" id="UP000002516">
    <property type="component" value="Chromosome"/>
</dbReference>
<dbReference type="GO" id="GO:0005737">
    <property type="term" value="C:cytoplasm"/>
    <property type="evidence" value="ECO:0007669"/>
    <property type="project" value="UniProtKB-SubCell"/>
</dbReference>
<dbReference type="GO" id="GO:0005524">
    <property type="term" value="F:ATP binding"/>
    <property type="evidence" value="ECO:0007669"/>
    <property type="project" value="UniProtKB-UniRule"/>
</dbReference>
<dbReference type="GO" id="GO:0008764">
    <property type="term" value="F:UDP-N-acetylmuramoylalanine-D-glutamate ligase activity"/>
    <property type="evidence" value="ECO:0007669"/>
    <property type="project" value="InterPro"/>
</dbReference>
<dbReference type="GO" id="GO:0051301">
    <property type="term" value="P:cell division"/>
    <property type="evidence" value="ECO:0007669"/>
    <property type="project" value="UniProtKB-KW"/>
</dbReference>
<dbReference type="GO" id="GO:0071555">
    <property type="term" value="P:cell wall organization"/>
    <property type="evidence" value="ECO:0007669"/>
    <property type="project" value="UniProtKB-KW"/>
</dbReference>
<dbReference type="GO" id="GO:0009252">
    <property type="term" value="P:peptidoglycan biosynthetic process"/>
    <property type="evidence" value="ECO:0007669"/>
    <property type="project" value="UniProtKB-UniRule"/>
</dbReference>
<dbReference type="GO" id="GO:0008360">
    <property type="term" value="P:regulation of cell shape"/>
    <property type="evidence" value="ECO:0007669"/>
    <property type="project" value="UniProtKB-KW"/>
</dbReference>
<dbReference type="Gene3D" id="3.90.190.20">
    <property type="entry name" value="Mur ligase, C-terminal domain"/>
    <property type="match status" value="1"/>
</dbReference>
<dbReference type="Gene3D" id="3.40.1190.10">
    <property type="entry name" value="Mur-like, catalytic domain"/>
    <property type="match status" value="1"/>
</dbReference>
<dbReference type="Gene3D" id="3.40.50.720">
    <property type="entry name" value="NAD(P)-binding Rossmann-like Domain"/>
    <property type="match status" value="1"/>
</dbReference>
<dbReference type="HAMAP" id="MF_00639">
    <property type="entry name" value="MurD"/>
    <property type="match status" value="1"/>
</dbReference>
<dbReference type="HAMAP" id="MF_02208">
    <property type="entry name" value="MurD2_subfam"/>
    <property type="match status" value="1"/>
</dbReference>
<dbReference type="InterPro" id="IPR036565">
    <property type="entry name" value="Mur-like_cat_sf"/>
</dbReference>
<dbReference type="InterPro" id="IPR036615">
    <property type="entry name" value="Mur_ligase_C_dom_sf"/>
</dbReference>
<dbReference type="InterPro" id="IPR013221">
    <property type="entry name" value="Mur_ligase_cen"/>
</dbReference>
<dbReference type="InterPro" id="IPR005762">
    <property type="entry name" value="MurD"/>
</dbReference>
<dbReference type="InterPro" id="IPR043687">
    <property type="entry name" value="MurD2"/>
</dbReference>
<dbReference type="NCBIfam" id="TIGR01087">
    <property type="entry name" value="murD"/>
    <property type="match status" value="1"/>
</dbReference>
<dbReference type="PANTHER" id="PTHR43692">
    <property type="entry name" value="UDP-N-ACETYLMURAMOYLALANINE--D-GLUTAMATE LIGASE"/>
    <property type="match status" value="1"/>
</dbReference>
<dbReference type="PANTHER" id="PTHR43692:SF1">
    <property type="entry name" value="UDP-N-ACETYLMURAMOYLALANINE--D-GLUTAMATE LIGASE"/>
    <property type="match status" value="1"/>
</dbReference>
<dbReference type="Pfam" id="PF08245">
    <property type="entry name" value="Mur_ligase_M"/>
    <property type="match status" value="1"/>
</dbReference>
<dbReference type="SUPFAM" id="SSF53623">
    <property type="entry name" value="MurD-like peptide ligases, catalytic domain"/>
    <property type="match status" value="1"/>
</dbReference>
<dbReference type="SUPFAM" id="SSF53244">
    <property type="entry name" value="MurD-like peptide ligases, peptide-binding domain"/>
    <property type="match status" value="1"/>
</dbReference>
<reference key="1">
    <citation type="journal article" date="2003" name="J. Bacteriol.">
        <title>Comparative analyses of the complete genome sequences of Pierce's disease and citrus variegated chlorosis strains of Xylella fastidiosa.</title>
        <authorList>
            <person name="Van Sluys M.A."/>
            <person name="de Oliveira M.C."/>
            <person name="Monteiro-Vitorello C.B."/>
            <person name="Miyaki C.Y."/>
            <person name="Furlan L.R."/>
            <person name="Camargo L.E.A."/>
            <person name="da Silva A.C.R."/>
            <person name="Moon D.H."/>
            <person name="Takita M.A."/>
            <person name="Lemos E.G.M."/>
            <person name="Machado M.A."/>
            <person name="Ferro M.I.T."/>
            <person name="da Silva F.R."/>
            <person name="Goldman M.H.S."/>
            <person name="Goldman G.H."/>
            <person name="Lemos M.V.F."/>
            <person name="El-Dorry H."/>
            <person name="Tsai S.M."/>
            <person name="Carrer H."/>
            <person name="Carraro D.M."/>
            <person name="de Oliveira R.C."/>
            <person name="Nunes L.R."/>
            <person name="Siqueira W.J."/>
            <person name="Coutinho L.L."/>
            <person name="Kimura E.T."/>
            <person name="Ferro E.S."/>
            <person name="Harakava R."/>
            <person name="Kuramae E.E."/>
            <person name="Marino C.L."/>
            <person name="Giglioti E."/>
            <person name="Abreu I.L."/>
            <person name="Alves L.M.C."/>
            <person name="do Amaral A.M."/>
            <person name="Baia G.S."/>
            <person name="Blanco S.R."/>
            <person name="Brito M.S."/>
            <person name="Cannavan F.S."/>
            <person name="Celestino A.V."/>
            <person name="da Cunha A.F."/>
            <person name="Fenille R.C."/>
            <person name="Ferro J.A."/>
            <person name="Formighieri E.F."/>
            <person name="Kishi L.T."/>
            <person name="Leoni S.G."/>
            <person name="Oliveira A.R."/>
            <person name="Rosa V.E. Jr."/>
            <person name="Sassaki F.T."/>
            <person name="Sena J.A.D."/>
            <person name="de Souza A.A."/>
            <person name="Truffi D."/>
            <person name="Tsukumo F."/>
            <person name="Yanai G.M."/>
            <person name="Zaros L.G."/>
            <person name="Civerolo E.L."/>
            <person name="Simpson A.J.G."/>
            <person name="Almeida N.F. Jr."/>
            <person name="Setubal J.C."/>
            <person name="Kitajima J.P."/>
        </authorList>
    </citation>
    <scope>NUCLEOTIDE SEQUENCE [LARGE SCALE GENOMIC DNA]</scope>
    <source>
        <strain>Temecula1 / ATCC 700964</strain>
    </source>
</reference>
<feature type="chain" id="PRO_0000109131" description="UDP-N-acetylmuramoyl-L-alanine--L-glutamate ligase">
    <location>
        <begin position="1"/>
        <end position="468"/>
    </location>
</feature>
<feature type="binding site" evidence="1">
    <location>
        <begin position="122"/>
        <end position="128"/>
    </location>
    <ligand>
        <name>ATP</name>
        <dbReference type="ChEBI" id="CHEBI:30616"/>
    </ligand>
</feature>
<evidence type="ECO:0000255" key="1">
    <source>
        <dbReference type="HAMAP-Rule" id="MF_02208"/>
    </source>
</evidence>
<gene>
    <name evidence="1" type="primary">murD2</name>
    <name type="ordered locus">PD_0410</name>
</gene>